<name>NAOX_STRPN</name>
<proteinExistence type="inferred from homology"/>
<sequence>MSKIVVVGANHAGTACINTMLDNFGNENEIVVFDQNSNISFLGCGMALWIGEQIDGAEGLFYSDKEKLEAKGAKVYMNSPVLSIDYDNKVVTAEVEGKEHKESYEKLIFATGSTPILPPIEGVEIVKGNREFKATLENVQFVKLYQNAEEVINKLSDKSQHLDRIAVVGGGYIGVELAEAFERLGKEVVLVDIVDTVLNGYYDKDFTQMMAKNLEDHNIRLALGQTVKAIEGDGKVERLITDKESFDVDMVILAVGFRPNTALAGGKIELFRNGAFLVDKKQETSIPDVYAVGDCATVYDNARKDTSYIALASNAVRTGIVGAYNACGHELEGIGVQGSNGISIYGLHMVSTGLTLEKAKAAGYNATETGFNDLQKPEFMKHDNHEVAIKIVFDKDSREILGAQMVSHDIAISMGIHMFSLAIQEHVTIDKLALTDLFFLPHFNKPYNYITMAALTAEK</sequence>
<evidence type="ECO:0000250" key="1">
    <source>
        <dbReference type="UniProtKB" id="P37062"/>
    </source>
</evidence>
<evidence type="ECO:0000250" key="2">
    <source>
        <dbReference type="UniProtKB" id="Q5XC60"/>
    </source>
</evidence>
<evidence type="ECO:0000250" key="3">
    <source>
        <dbReference type="UniProtKB" id="Q8DP70"/>
    </source>
</evidence>
<evidence type="ECO:0000269" key="4">
    <source>
    </source>
</evidence>
<evidence type="ECO:0000305" key="5"/>
<evidence type="ECO:0000312" key="6">
    <source>
        <dbReference type="EMBL" id="AAK75563.1"/>
    </source>
</evidence>
<evidence type="ECO:0000312" key="7">
    <source>
        <dbReference type="Proteomes" id="UP000000585"/>
    </source>
</evidence>
<gene>
    <name evidence="6" type="primary">nox</name>
    <name evidence="6" type="ordered locus">SP_1469</name>
</gene>
<accession>A0A0H2UQZ4</accession>
<organism evidence="7">
    <name type="scientific">Streptococcus pneumoniae serotype 4 (strain ATCC BAA-334 / TIGR4)</name>
    <dbReference type="NCBI Taxonomy" id="170187"/>
    <lineage>
        <taxon>Bacteria</taxon>
        <taxon>Bacillati</taxon>
        <taxon>Bacillota</taxon>
        <taxon>Bacilli</taxon>
        <taxon>Lactobacillales</taxon>
        <taxon>Streptococcaceae</taxon>
        <taxon>Streptococcus</taxon>
    </lineage>
</organism>
<feature type="chain" id="PRO_0000458484" description="NADH oxidase">
    <location>
        <begin position="1"/>
        <end position="459"/>
    </location>
</feature>
<feature type="active site" description="Proton acceptor" evidence="1">
    <location>
        <position position="11"/>
    </location>
</feature>
<feature type="active site" description="Redox-active" evidence="2">
    <location>
        <position position="44"/>
    </location>
</feature>
<feature type="binding site" evidence="2">
    <location>
        <position position="10"/>
    </location>
    <ligand>
        <name>FAD</name>
        <dbReference type="ChEBI" id="CHEBI:57692"/>
    </ligand>
</feature>
<feature type="binding site" evidence="2">
    <location>
        <position position="12"/>
    </location>
    <ligand>
        <name>FAD</name>
        <dbReference type="ChEBI" id="CHEBI:57692"/>
    </ligand>
</feature>
<feature type="binding site" evidence="2">
    <location>
        <position position="34"/>
    </location>
    <ligand>
        <name>FAD</name>
        <dbReference type="ChEBI" id="CHEBI:57692"/>
    </ligand>
</feature>
<feature type="binding site" evidence="2">
    <location>
        <position position="35"/>
    </location>
    <ligand>
        <name>FAD</name>
        <dbReference type="ChEBI" id="CHEBI:57692"/>
    </ligand>
</feature>
<feature type="binding site" evidence="2">
    <location>
        <position position="44"/>
    </location>
    <ligand>
        <name>FAD</name>
        <dbReference type="ChEBI" id="CHEBI:57692"/>
    </ligand>
</feature>
<feature type="binding site" evidence="2">
    <location>
        <position position="81"/>
    </location>
    <ligand>
        <name>FAD</name>
        <dbReference type="ChEBI" id="CHEBI:57692"/>
    </ligand>
</feature>
<feature type="binding site" evidence="2">
    <location>
        <position position="110"/>
    </location>
    <ligand>
        <name>FAD</name>
        <dbReference type="ChEBI" id="CHEBI:57692"/>
    </ligand>
</feature>
<feature type="binding site" evidence="2">
    <location>
        <position position="113"/>
    </location>
    <ligand>
        <name>FAD</name>
        <dbReference type="ChEBI" id="CHEBI:57692"/>
    </ligand>
</feature>
<feature type="binding site" evidence="2">
    <location>
        <position position="143"/>
    </location>
    <ligand>
        <name>FAD</name>
        <dbReference type="ChEBI" id="CHEBI:57692"/>
    </ligand>
</feature>
<feature type="binding site" evidence="2">
    <location>
        <position position="172"/>
    </location>
    <ligand>
        <name>FAD</name>
        <dbReference type="ChEBI" id="CHEBI:57692"/>
    </ligand>
</feature>
<feature type="binding site" evidence="1">
    <location>
        <position position="173"/>
    </location>
    <ligand>
        <name>NAD(+)</name>
        <dbReference type="ChEBI" id="CHEBI:57540"/>
    </ligand>
</feature>
<feature type="binding site" evidence="1">
    <location>
        <position position="192"/>
    </location>
    <ligand>
        <name>NAD(+)</name>
        <dbReference type="ChEBI" id="CHEBI:57540"/>
    </ligand>
</feature>
<feature type="binding site" evidence="1">
    <location>
        <position position="201"/>
    </location>
    <ligand>
        <name>NAD(+)</name>
        <dbReference type="ChEBI" id="CHEBI:57540"/>
    </ligand>
</feature>
<feature type="binding site" evidence="1">
    <location>
        <position position="256"/>
    </location>
    <ligand>
        <name>NAD(+)</name>
        <dbReference type="ChEBI" id="CHEBI:57540"/>
    </ligand>
</feature>
<feature type="binding site" evidence="2">
    <location>
        <position position="294"/>
    </location>
    <ligand>
        <name>FAD</name>
        <dbReference type="ChEBI" id="CHEBI:57692"/>
    </ligand>
</feature>
<feature type="binding site" evidence="1">
    <location>
        <position position="310"/>
    </location>
    <ligand>
        <name>NAD(+)</name>
        <dbReference type="ChEBI" id="CHEBI:57540"/>
    </ligand>
</feature>
<feature type="binding site" evidence="2">
    <location>
        <position position="311"/>
    </location>
    <ligand>
        <name>FAD</name>
        <dbReference type="ChEBI" id="CHEBI:57692"/>
    </ligand>
</feature>
<feature type="binding site" evidence="2">
    <location>
        <position position="312"/>
    </location>
    <ligand>
        <name>FAD</name>
        <dbReference type="ChEBI" id="CHEBI:57692"/>
    </ligand>
</feature>
<feature type="binding site" evidence="2">
    <location>
        <position position="313"/>
    </location>
    <ligand>
        <name>FAD</name>
        <dbReference type="ChEBI" id="CHEBI:57692"/>
    </ligand>
</feature>
<feature type="binding site" evidence="1">
    <location>
        <position position="341"/>
    </location>
    <ligand>
        <name>NAD(+)</name>
        <dbReference type="ChEBI" id="CHEBI:57540"/>
    </ligand>
</feature>
<feature type="binding site" evidence="2">
    <location>
        <position position="439"/>
    </location>
    <ligand>
        <name>FAD</name>
        <dbReference type="ChEBI" id="CHEBI:57692"/>
    </ligand>
</feature>
<feature type="modified residue" description="Cysteine sulfinic acid (-SO2H)" evidence="2">
    <location>
        <position position="44"/>
    </location>
</feature>
<comment type="function">
    <text evidence="2 3 4">Catalyzes the four-electron reduction of molecular oxygen to water (By similarity). Plays a role in redox balance maintenance (PubMed:36928033). May be involved in mediating bacterial adhesion to host cells (By similarity). May be considered a potential virulence factor (By similarity).</text>
</comment>
<comment type="catalytic activity">
    <molecule>NADH oxidase</molecule>
    <reaction evidence="2">
        <text>2 NADH + O2 + 2 H(+) = 2 NAD(+) + 2 H2O</text>
        <dbReference type="Rhea" id="RHEA:37799"/>
        <dbReference type="ChEBI" id="CHEBI:15377"/>
        <dbReference type="ChEBI" id="CHEBI:15378"/>
        <dbReference type="ChEBI" id="CHEBI:15379"/>
        <dbReference type="ChEBI" id="CHEBI:57540"/>
        <dbReference type="ChEBI" id="CHEBI:57945"/>
        <dbReference type="EC" id="1.6.3.4"/>
    </reaction>
</comment>
<comment type="cofactor">
    <cofactor evidence="2">
        <name>FAD</name>
        <dbReference type="ChEBI" id="CHEBI:57692"/>
    </cofactor>
    <text evidence="2">Binds 1 FAD per subunit.</text>
</comment>
<comment type="subcellular location">
    <subcellularLocation>
        <location evidence="3">Secreted</location>
        <location evidence="3">Cell wall</location>
    </subcellularLocation>
</comment>
<comment type="disruption phenotype">
    <text evidence="4">Reduces total NAD(H) levels by 22.1% and increases the NAD+/NADH ratio by 20.4% (PubMed:36928033). Modest decrease in the ATP pool (PubMed:36928033). Extended lag phase during growth in media (PubMed:36928033). Increases susceptibility to erythromycin, but not to gentamicin, chloramphenicol, rifampicin, penicillin and vancomycin (PubMed:36928033).</text>
</comment>
<comment type="miscellaneous">
    <text evidence="4">Successfuly tested strategy of using drug inhibitors targeting fermentation pathways for their potential as adjuvants to antibiotics.</text>
</comment>
<comment type="similarity">
    <text evidence="5">Belongs to the class-III pyridine nucleotide-disulfide oxidoreductase family.</text>
</comment>
<protein>
    <recommendedName>
        <fullName evidence="2">NADH oxidase</fullName>
        <shortName evidence="2">NOXase</shortName>
        <ecNumber evidence="2">1.6.3.4</ecNumber>
    </recommendedName>
</protein>
<reference evidence="7" key="1">
    <citation type="journal article" date="2001" name="Science">
        <title>Complete genome sequence of a virulent isolate of Streptococcus pneumoniae.</title>
        <authorList>
            <person name="Tettelin H."/>
            <person name="Nelson K.E."/>
            <person name="Paulsen I.T."/>
            <person name="Eisen J.A."/>
            <person name="Read T.D."/>
            <person name="Peterson S.N."/>
            <person name="Heidelberg J.F."/>
            <person name="DeBoy R.T."/>
            <person name="Haft D.H."/>
            <person name="Dodson R.J."/>
            <person name="Durkin A.S."/>
            <person name="Gwinn M.L."/>
            <person name="Kolonay J.F."/>
            <person name="Nelson W.C."/>
            <person name="Peterson J.D."/>
            <person name="Umayam L.A."/>
            <person name="White O."/>
            <person name="Salzberg S.L."/>
            <person name="Lewis M.R."/>
            <person name="Radune D."/>
            <person name="Holtzapple E.K."/>
            <person name="Khouri H.M."/>
            <person name="Wolf A.M."/>
            <person name="Utterback T.R."/>
            <person name="Hansen C.L."/>
            <person name="McDonald L.A."/>
            <person name="Feldblyum T.V."/>
            <person name="Angiuoli S.V."/>
            <person name="Dickinson T."/>
            <person name="Hickey E.K."/>
            <person name="Holt I.E."/>
            <person name="Loftus B.J."/>
            <person name="Yang F."/>
            <person name="Smith H.O."/>
            <person name="Venter J.C."/>
            <person name="Dougherty B.A."/>
            <person name="Morrison D.A."/>
            <person name="Hollingshead S.K."/>
            <person name="Fraser C.M."/>
        </authorList>
    </citation>
    <scope>NUCLEOTIDE SEQUENCE [LARGE SCALE GENOMIC DNA]</scope>
    <source>
        <strain evidence="7">ATCC BAA-334 / TIGR4</strain>
    </source>
</reference>
<reference evidence="5" key="2">
    <citation type="journal article" date="2023" name="PLoS Biol.">
        <title>Targeting NAD+ regeneration enhances antibiotic susceptibility of Streptococcus pneumoniae during invasive disease.</title>
        <authorList>
            <person name="Im H."/>
            <person name="Pearson M.L."/>
            <person name="Martinez E."/>
            <person name="Cichos K.H."/>
            <person name="Song X."/>
            <person name="Kruckow K.L."/>
            <person name="Andrews R.M."/>
            <person name="Ghanem E.S."/>
            <person name="Orihuela C.J."/>
        </authorList>
    </citation>
    <scope>FUNCTION</scope>
    <scope>DISRUPTION PHENOTYPE</scope>
    <scope>IDENTIFICATION AS A DRUG TARGET</scope>
</reference>
<dbReference type="EC" id="1.6.3.4" evidence="2"/>
<dbReference type="EMBL" id="AE005672">
    <property type="protein sequence ID" value="AAK75563.1"/>
    <property type="molecule type" value="Genomic_DNA"/>
</dbReference>
<dbReference type="RefSeq" id="WP_000036793.1">
    <property type="nucleotide sequence ID" value="NZ_CP155539.1"/>
</dbReference>
<dbReference type="SMR" id="A0A0H2UQZ4"/>
<dbReference type="PaxDb" id="170187-SP_1469"/>
<dbReference type="EnsemblBacteria" id="AAK75563">
    <property type="protein sequence ID" value="AAK75563"/>
    <property type="gene ID" value="SP_1469"/>
</dbReference>
<dbReference type="KEGG" id="spn:SP_1469"/>
<dbReference type="eggNOG" id="COG0446">
    <property type="taxonomic scope" value="Bacteria"/>
</dbReference>
<dbReference type="PhylomeDB" id="A0A0H2UQZ4"/>
<dbReference type="BioCyc" id="SPNE170187:G1FZB-1485-MONOMER"/>
<dbReference type="Proteomes" id="UP000000585">
    <property type="component" value="Chromosome"/>
</dbReference>
<dbReference type="GO" id="GO:0005576">
    <property type="term" value="C:extracellular region"/>
    <property type="evidence" value="ECO:0007669"/>
    <property type="project" value="UniProtKB-KW"/>
</dbReference>
<dbReference type="GO" id="GO:0016491">
    <property type="term" value="F:oxidoreductase activity"/>
    <property type="evidence" value="ECO:0007669"/>
    <property type="project" value="UniProtKB-KW"/>
</dbReference>
<dbReference type="Gene3D" id="3.30.390.30">
    <property type="match status" value="1"/>
</dbReference>
<dbReference type="Gene3D" id="3.50.50.60">
    <property type="entry name" value="FAD/NAD(P)-binding domain"/>
    <property type="match status" value="2"/>
</dbReference>
<dbReference type="InterPro" id="IPR050260">
    <property type="entry name" value="FAD-bd_OxRdtase"/>
</dbReference>
<dbReference type="InterPro" id="IPR036188">
    <property type="entry name" value="FAD/NAD-bd_sf"/>
</dbReference>
<dbReference type="InterPro" id="IPR023753">
    <property type="entry name" value="FAD/NAD-binding_dom"/>
</dbReference>
<dbReference type="InterPro" id="IPR016156">
    <property type="entry name" value="FAD/NAD-linked_Rdtase_dimer_sf"/>
</dbReference>
<dbReference type="InterPro" id="IPR004099">
    <property type="entry name" value="Pyr_nucl-diS_OxRdtase_dimer"/>
</dbReference>
<dbReference type="NCBIfam" id="NF046103">
    <property type="entry name" value="NOXase_Strep"/>
    <property type="match status" value="1"/>
</dbReference>
<dbReference type="PANTHER" id="PTHR43429:SF1">
    <property type="entry name" value="NAD(P)H SULFUR OXIDOREDUCTASE (COA-DEPENDENT)"/>
    <property type="match status" value="1"/>
</dbReference>
<dbReference type="PANTHER" id="PTHR43429">
    <property type="entry name" value="PYRIDINE NUCLEOTIDE-DISULFIDE OXIDOREDUCTASE DOMAIN-CONTAINING"/>
    <property type="match status" value="1"/>
</dbReference>
<dbReference type="Pfam" id="PF07992">
    <property type="entry name" value="Pyr_redox_2"/>
    <property type="match status" value="1"/>
</dbReference>
<dbReference type="Pfam" id="PF02852">
    <property type="entry name" value="Pyr_redox_dim"/>
    <property type="match status" value="1"/>
</dbReference>
<dbReference type="PRINTS" id="PR00368">
    <property type="entry name" value="FADPNR"/>
</dbReference>
<dbReference type="PRINTS" id="PR00411">
    <property type="entry name" value="PNDRDTASEI"/>
</dbReference>
<dbReference type="SUPFAM" id="SSF51905">
    <property type="entry name" value="FAD/NAD(P)-binding domain"/>
    <property type="match status" value="1"/>
</dbReference>
<dbReference type="SUPFAM" id="SSF55424">
    <property type="entry name" value="FAD/NAD-linked reductases, dimerisation (C-terminal) domain"/>
    <property type="match status" value="1"/>
</dbReference>
<keyword id="KW-0134">Cell wall</keyword>
<keyword id="KW-0274">FAD</keyword>
<keyword id="KW-0285">Flavoprotein</keyword>
<keyword id="KW-0520">NAD</keyword>
<keyword id="KW-0558">Oxidation</keyword>
<keyword id="KW-0560">Oxidoreductase</keyword>
<keyword id="KW-0676">Redox-active center</keyword>
<keyword id="KW-1185">Reference proteome</keyword>
<keyword id="KW-0964">Secreted</keyword>